<evidence type="ECO:0000255" key="1"/>
<evidence type="ECO:0000255" key="2">
    <source>
        <dbReference type="PROSITE-ProRule" id="PRU10055"/>
    </source>
</evidence>
<evidence type="ECO:0000269" key="3">
    <source>
    </source>
</evidence>
<evidence type="ECO:0000305" key="4"/>
<sequence length="470" mass="53161">MKAFPETFLWGGATAANQVEGAWQEDGKGISTSDLQPHGVMGKMEPRILGKENIKDVAIDFYHRYPEDIALFAEMGFTCLRISIAWARIFPQGDEVEPNEAGLAFYDRLFDEMAQAGIKPLVTLSHYEMPYGLVKNYGGWANRAVIDHFEHYARTVFTRYQHKVALWLTFNEINMSLHAPFTGVGLAEESGEAEVYQAIHHQLVASARAVKACHSLLPEAKIGNMLLGGLVYPLTCQPQDMLQAMEENRRWMFFGDVQARGQYPGYMQRFFRDHNITIEMTESDAEDLKHTVDFISFSYYMTGCVSHDESINKNAQGNILNMIPNPHLKSSEWGWQIDPVGLRVLLNTLWDRYQKPLFIVENGLGAKDSVEADGSIQDDYRIAYLNDHLVQVNEAIADGVDIMGYTSWGPIDLVSASHSQMSKRYGFIYVDRDDNGEGSLTRTRKKSFGWYAEVIKTRGLSLKKITIKAP</sequence>
<organism>
    <name type="scientific">Escherichia coli (strain K12)</name>
    <dbReference type="NCBI Taxonomy" id="83333"/>
    <lineage>
        <taxon>Bacteria</taxon>
        <taxon>Pseudomonadati</taxon>
        <taxon>Pseudomonadota</taxon>
        <taxon>Gammaproteobacteria</taxon>
        <taxon>Enterobacterales</taxon>
        <taxon>Enterobacteriaceae</taxon>
        <taxon>Escherichia</taxon>
    </lineage>
</organism>
<name>BGLB_ECOLI</name>
<gene>
    <name type="primary">bglB</name>
    <name type="ordered locus">b3721</name>
    <name type="ordered locus">JW3699</name>
</gene>
<reference key="1">
    <citation type="journal article" date="1987" name="J. Bacteriol.">
        <title>Beta-glucoside (bgl) operon of Escherichia coli K-12: nucleotide sequence, genetic organization, and possible evolutionary relationship to regulatory components of two Bacillus subtilis genes.</title>
        <authorList>
            <person name="Schnetz K."/>
            <person name="Toloczyki C."/>
            <person name="Rak B."/>
        </authorList>
    </citation>
    <scope>NUCLEOTIDE SEQUENCE [GENOMIC DNA]</scope>
    <scope>CRYPTIC OPERON</scope>
    <source>
        <strain>K12</strain>
    </source>
</reference>
<reference key="2">
    <citation type="journal article" date="1993" name="Genomics">
        <title>DNA sequence and analysis of 136 kilobases of the Escherichia coli genome: organizational symmetry around the origin of replication.</title>
        <authorList>
            <person name="Burland V.D."/>
            <person name="Plunkett G. III"/>
            <person name="Daniels D.L."/>
            <person name="Blattner F.R."/>
        </authorList>
    </citation>
    <scope>NUCLEOTIDE SEQUENCE [LARGE SCALE GENOMIC DNA]</scope>
    <source>
        <strain>K12 / MG1655 / ATCC 47076</strain>
    </source>
</reference>
<reference key="3">
    <citation type="journal article" date="1997" name="Science">
        <title>The complete genome sequence of Escherichia coli K-12.</title>
        <authorList>
            <person name="Blattner F.R."/>
            <person name="Plunkett G. III"/>
            <person name="Bloch C.A."/>
            <person name="Perna N.T."/>
            <person name="Burland V."/>
            <person name="Riley M."/>
            <person name="Collado-Vides J."/>
            <person name="Glasner J.D."/>
            <person name="Rode C.K."/>
            <person name="Mayhew G.F."/>
            <person name="Gregor J."/>
            <person name="Davis N.W."/>
            <person name="Kirkpatrick H.A."/>
            <person name="Goeden M.A."/>
            <person name="Rose D.J."/>
            <person name="Mau B."/>
            <person name="Shao Y."/>
        </authorList>
    </citation>
    <scope>NUCLEOTIDE SEQUENCE [LARGE SCALE GENOMIC DNA]</scope>
    <source>
        <strain>K12 / MG1655 / ATCC 47076</strain>
    </source>
</reference>
<reference key="4">
    <citation type="journal article" date="2006" name="Mol. Syst. Biol.">
        <title>Highly accurate genome sequences of Escherichia coli K-12 strains MG1655 and W3110.</title>
        <authorList>
            <person name="Hayashi K."/>
            <person name="Morooka N."/>
            <person name="Yamamoto Y."/>
            <person name="Fujita K."/>
            <person name="Isono K."/>
            <person name="Choi S."/>
            <person name="Ohtsubo E."/>
            <person name="Baba T."/>
            <person name="Wanner B.L."/>
            <person name="Mori H."/>
            <person name="Horiuchi T."/>
        </authorList>
    </citation>
    <scope>NUCLEOTIDE SEQUENCE [LARGE SCALE GENOMIC DNA]</scope>
    <source>
        <strain>K12 / W3110 / ATCC 27325 / DSM 5911</strain>
    </source>
</reference>
<reference key="5">
    <citation type="journal article" date="1987" name="J. Gen. Microbiol.">
        <title>Nucleotide sequence of bglC, the gene specifying enzymeIIbgl of the PEP:sugar phosphotransferase system in Escherichia coli K12, and overexpression of the gene product.</title>
        <authorList>
            <person name="Bramley H.F."/>
            <person name="Kornberg H.L."/>
        </authorList>
    </citation>
    <scope>NUCLEOTIDE SEQUENCE [GENOMIC DNA] OF 1-19</scope>
    <source>
        <strain>K12</strain>
    </source>
</reference>
<reference key="6">
    <citation type="journal article" date="1973" name="J. Bacteriol.">
        <title>Genetic determination of the constitutive biosynthesis of phospho-glucosidase A in Escherichia coli K-12.</title>
        <authorList>
            <person name="Prasad I."/>
            <person name="Young B."/>
            <person name="Schaefler S."/>
        </authorList>
    </citation>
    <scope>FUNCTION AS A GLUCOSIDASE</scope>
    <scope>SUBSTRATE SPECIFICITY</scope>
</reference>
<accession>P11988</accession>
<accession>P78124</accession>
<accession>Q2M839</accession>
<protein>
    <recommendedName>
        <fullName>6-phospho-beta-glucosidase BglB</fullName>
        <ecNumber>3.2.1.86</ecNumber>
    </recommendedName>
    <alternativeName>
        <fullName>Phospho-beta-glucosidase B</fullName>
    </alternativeName>
</protein>
<keyword id="KW-0326">Glycosidase</keyword>
<keyword id="KW-0378">Hydrolase</keyword>
<keyword id="KW-1185">Reference proteome</keyword>
<feature type="chain" id="PRO_0000063898" description="6-phospho-beta-glucosidase BglB">
    <location>
        <begin position="1"/>
        <end position="470"/>
    </location>
</feature>
<feature type="active site" description="Proton donor" evidence="1">
    <location>
        <position position="172"/>
    </location>
</feature>
<feature type="active site" description="Nucleophile" evidence="2">
    <location>
        <position position="361"/>
    </location>
</feature>
<feature type="sequence conflict" description="In Ref. 1; AAA23511." evidence="4" ref="1">
    <original>D</original>
    <variation>G</variation>
    <location>
        <position position="147"/>
    </location>
</feature>
<feature type="sequence conflict" description="In Ref. 1; AAA23511." evidence="4" ref="1">
    <original>GWY</original>
    <variation>RMVC</variation>
    <location>
        <begin position="449"/>
        <end position="451"/>
    </location>
</feature>
<proteinExistence type="evidence at protein level"/>
<comment type="function">
    <text evidence="3">Catalyzes the hydrolysis of phosphorylated beta-glucosides into glucose-6-phosphate (G-6-P) and aglycone. It has a high affinity for phosphorylated aromatic beta-glucosides (p-nitrophenyl-beta-glucoside, phenyl beta-glucoside, arbutin and phosphorylated salicin), and a low affinity for phosphorylated beta-methyl-glucoside.</text>
</comment>
<comment type="catalytic activity">
    <reaction>
        <text>6-phospho-beta-D-glucosyl-(1-&gt;4)-D-glucose + H2O = D-glucose 6-phosphate + D-glucose</text>
        <dbReference type="Rhea" id="RHEA:10772"/>
        <dbReference type="ChEBI" id="CHEBI:4167"/>
        <dbReference type="ChEBI" id="CHEBI:15377"/>
        <dbReference type="ChEBI" id="CHEBI:58312"/>
        <dbReference type="ChEBI" id="CHEBI:61548"/>
        <dbReference type="EC" id="3.2.1.86"/>
    </reaction>
</comment>
<comment type="miscellaneous">
    <text>Part of the cryptic bglGFBH operon.</text>
</comment>
<comment type="similarity">
    <text evidence="4">Belongs to the glycosyl hydrolase 1 family.</text>
</comment>
<dbReference type="EC" id="3.2.1.86"/>
<dbReference type="EMBL" id="M16487">
    <property type="protein sequence ID" value="AAA23511.1"/>
    <property type="molecule type" value="Genomic_DNA"/>
</dbReference>
<dbReference type="EMBL" id="L10328">
    <property type="protein sequence ID" value="AAA62072.1"/>
    <property type="molecule type" value="Genomic_DNA"/>
</dbReference>
<dbReference type="EMBL" id="U00096">
    <property type="protein sequence ID" value="AAC76744.1"/>
    <property type="molecule type" value="Genomic_DNA"/>
</dbReference>
<dbReference type="EMBL" id="AP009048">
    <property type="protein sequence ID" value="BAE77567.1"/>
    <property type="molecule type" value="Genomic_DNA"/>
</dbReference>
<dbReference type="EMBL" id="M15746">
    <property type="protein sequence ID" value="AAA83838.1"/>
    <property type="molecule type" value="Genomic_DNA"/>
</dbReference>
<dbReference type="PIR" id="B65175">
    <property type="entry name" value="B65175"/>
</dbReference>
<dbReference type="RefSeq" id="NP_418177.1">
    <property type="nucleotide sequence ID" value="NC_000913.3"/>
</dbReference>
<dbReference type="RefSeq" id="WP_000643228.1">
    <property type="nucleotide sequence ID" value="NZ_SSZK01000036.1"/>
</dbReference>
<dbReference type="SMR" id="P11988"/>
<dbReference type="BioGRID" id="4261195">
    <property type="interactions" value="16"/>
</dbReference>
<dbReference type="BioGRID" id="852536">
    <property type="interactions" value="1"/>
</dbReference>
<dbReference type="DIP" id="DIP-9214N"/>
<dbReference type="FunCoup" id="P11988">
    <property type="interactions" value="660"/>
</dbReference>
<dbReference type="IntAct" id="P11988">
    <property type="interactions" value="4"/>
</dbReference>
<dbReference type="STRING" id="511145.b3721"/>
<dbReference type="CAZy" id="GH1">
    <property type="family name" value="Glycoside Hydrolase Family 1"/>
</dbReference>
<dbReference type="PaxDb" id="511145-b3721"/>
<dbReference type="EnsemblBacteria" id="AAC76744">
    <property type="protein sequence ID" value="AAC76744"/>
    <property type="gene ID" value="b3721"/>
</dbReference>
<dbReference type="GeneID" id="948234"/>
<dbReference type="KEGG" id="ecj:JW3699"/>
<dbReference type="KEGG" id="eco:b3721"/>
<dbReference type="KEGG" id="ecoc:C3026_20170"/>
<dbReference type="PATRIC" id="fig|1411691.4.peg.2980"/>
<dbReference type="EchoBASE" id="EB0112"/>
<dbReference type="eggNOG" id="COG2723">
    <property type="taxonomic scope" value="Bacteria"/>
</dbReference>
<dbReference type="HOGENOM" id="CLU_001859_0_2_6"/>
<dbReference type="InParanoid" id="P11988"/>
<dbReference type="OMA" id="YGGWGSR"/>
<dbReference type="OrthoDB" id="9765195at2"/>
<dbReference type="PhylomeDB" id="P11988"/>
<dbReference type="BioCyc" id="EcoCyc:EG10114-MONOMER"/>
<dbReference type="BioCyc" id="MetaCyc:EG10114-MONOMER"/>
<dbReference type="SABIO-RK" id="P11988"/>
<dbReference type="PRO" id="PR:P11988"/>
<dbReference type="Proteomes" id="UP000000625">
    <property type="component" value="Chromosome"/>
</dbReference>
<dbReference type="GO" id="GO:0005829">
    <property type="term" value="C:cytosol"/>
    <property type="evidence" value="ECO:0000318"/>
    <property type="project" value="GO_Central"/>
</dbReference>
<dbReference type="GO" id="GO:0008706">
    <property type="term" value="F:6-phospho-beta-glucosidase activity"/>
    <property type="evidence" value="ECO:0007669"/>
    <property type="project" value="UniProtKB-EC"/>
</dbReference>
<dbReference type="GO" id="GO:0008422">
    <property type="term" value="F:beta-glucosidase activity"/>
    <property type="evidence" value="ECO:0000318"/>
    <property type="project" value="GO_Central"/>
</dbReference>
<dbReference type="GO" id="GO:0004553">
    <property type="term" value="F:hydrolase activity, hydrolyzing O-glycosyl compounds"/>
    <property type="evidence" value="ECO:0000250"/>
    <property type="project" value="UniProtKB"/>
</dbReference>
<dbReference type="GO" id="GO:0016052">
    <property type="term" value="P:carbohydrate catabolic process"/>
    <property type="evidence" value="ECO:0000318"/>
    <property type="project" value="GO_Central"/>
</dbReference>
<dbReference type="FunFam" id="3.20.20.80:FF:000004">
    <property type="entry name" value="Beta-glucosidase 6-phospho-beta-glucosidase"/>
    <property type="match status" value="1"/>
</dbReference>
<dbReference type="Gene3D" id="3.20.20.80">
    <property type="entry name" value="Glycosidases"/>
    <property type="match status" value="1"/>
</dbReference>
<dbReference type="InterPro" id="IPR001360">
    <property type="entry name" value="Glyco_hydro_1"/>
</dbReference>
<dbReference type="InterPro" id="IPR018120">
    <property type="entry name" value="Glyco_hydro_1_AS"/>
</dbReference>
<dbReference type="InterPro" id="IPR033132">
    <property type="entry name" value="Glyco_hydro_1_N_CS"/>
</dbReference>
<dbReference type="InterPro" id="IPR017853">
    <property type="entry name" value="Glycoside_hydrolase_SF"/>
</dbReference>
<dbReference type="NCBIfam" id="NF007356">
    <property type="entry name" value="PRK09852.1"/>
    <property type="match status" value="1"/>
</dbReference>
<dbReference type="PANTHER" id="PTHR10353:SF122">
    <property type="entry name" value="6-PHOSPHO-BETA-GLUCOSIDASE ASCB-RELATED"/>
    <property type="match status" value="1"/>
</dbReference>
<dbReference type="PANTHER" id="PTHR10353">
    <property type="entry name" value="GLYCOSYL HYDROLASE"/>
    <property type="match status" value="1"/>
</dbReference>
<dbReference type="Pfam" id="PF00232">
    <property type="entry name" value="Glyco_hydro_1"/>
    <property type="match status" value="1"/>
</dbReference>
<dbReference type="PRINTS" id="PR00131">
    <property type="entry name" value="GLHYDRLASE1"/>
</dbReference>
<dbReference type="SUPFAM" id="SSF51445">
    <property type="entry name" value="(Trans)glycosidases"/>
    <property type="match status" value="1"/>
</dbReference>
<dbReference type="PROSITE" id="PS00572">
    <property type="entry name" value="GLYCOSYL_HYDROL_F1_1"/>
    <property type="match status" value="1"/>
</dbReference>
<dbReference type="PROSITE" id="PS00653">
    <property type="entry name" value="GLYCOSYL_HYDROL_F1_2"/>
    <property type="match status" value="1"/>
</dbReference>